<feature type="chain" id="PRO_0000158464" description="Ribose-5-phosphate isomerase A">
    <location>
        <begin position="1"/>
        <end position="228"/>
    </location>
</feature>
<feature type="active site" description="Proton acceptor" evidence="1">
    <location>
        <position position="107"/>
    </location>
</feature>
<feature type="binding site" evidence="1">
    <location>
        <begin position="29"/>
        <end position="32"/>
    </location>
    <ligand>
        <name>substrate</name>
    </ligand>
</feature>
<feature type="binding site" evidence="1">
    <location>
        <begin position="85"/>
        <end position="88"/>
    </location>
    <ligand>
        <name>substrate</name>
    </ligand>
</feature>
<feature type="binding site" evidence="1">
    <location>
        <begin position="98"/>
        <end position="101"/>
    </location>
    <ligand>
        <name>substrate</name>
    </ligand>
</feature>
<feature type="binding site" evidence="1">
    <location>
        <position position="125"/>
    </location>
    <ligand>
        <name>substrate</name>
    </ligand>
</feature>
<name>RPIA_STAAM</name>
<keyword id="KW-0413">Isomerase</keyword>
<dbReference type="EC" id="5.3.1.6" evidence="1"/>
<dbReference type="EMBL" id="BA000017">
    <property type="protein sequence ID" value="BAB58498.1"/>
    <property type="molecule type" value="Genomic_DNA"/>
</dbReference>
<dbReference type="RefSeq" id="WP_000655864.1">
    <property type="nucleotide sequence ID" value="NC_002758.2"/>
</dbReference>
<dbReference type="SMR" id="P66694"/>
<dbReference type="KEGG" id="sav:SAV2336"/>
<dbReference type="HOGENOM" id="CLU_056590_1_0_9"/>
<dbReference type="PhylomeDB" id="P66694"/>
<dbReference type="UniPathway" id="UPA00115">
    <property type="reaction ID" value="UER00412"/>
</dbReference>
<dbReference type="Proteomes" id="UP000002481">
    <property type="component" value="Chromosome"/>
</dbReference>
<dbReference type="GO" id="GO:0005829">
    <property type="term" value="C:cytosol"/>
    <property type="evidence" value="ECO:0007669"/>
    <property type="project" value="TreeGrafter"/>
</dbReference>
<dbReference type="GO" id="GO:0004751">
    <property type="term" value="F:ribose-5-phosphate isomerase activity"/>
    <property type="evidence" value="ECO:0007669"/>
    <property type="project" value="UniProtKB-UniRule"/>
</dbReference>
<dbReference type="GO" id="GO:0006014">
    <property type="term" value="P:D-ribose metabolic process"/>
    <property type="evidence" value="ECO:0007669"/>
    <property type="project" value="TreeGrafter"/>
</dbReference>
<dbReference type="GO" id="GO:0009052">
    <property type="term" value="P:pentose-phosphate shunt, non-oxidative branch"/>
    <property type="evidence" value="ECO:0007669"/>
    <property type="project" value="UniProtKB-UniRule"/>
</dbReference>
<dbReference type="CDD" id="cd01398">
    <property type="entry name" value="RPI_A"/>
    <property type="match status" value="1"/>
</dbReference>
<dbReference type="FunFam" id="3.40.50.1360:FF:000001">
    <property type="entry name" value="Ribose-5-phosphate isomerase A"/>
    <property type="match status" value="1"/>
</dbReference>
<dbReference type="Gene3D" id="3.30.70.260">
    <property type="match status" value="1"/>
</dbReference>
<dbReference type="Gene3D" id="3.40.50.1360">
    <property type="match status" value="1"/>
</dbReference>
<dbReference type="HAMAP" id="MF_00170">
    <property type="entry name" value="Rib_5P_isom_A"/>
    <property type="match status" value="1"/>
</dbReference>
<dbReference type="InterPro" id="IPR037171">
    <property type="entry name" value="NagB/RpiA_transferase-like"/>
</dbReference>
<dbReference type="InterPro" id="IPR020672">
    <property type="entry name" value="Ribose5P_isomerase_typA_subgr"/>
</dbReference>
<dbReference type="InterPro" id="IPR004788">
    <property type="entry name" value="Ribose5P_isomerase_type_A"/>
</dbReference>
<dbReference type="NCBIfam" id="NF001924">
    <property type="entry name" value="PRK00702.1"/>
    <property type="match status" value="1"/>
</dbReference>
<dbReference type="NCBIfam" id="NF010585">
    <property type="entry name" value="PRK13978.1"/>
    <property type="match status" value="1"/>
</dbReference>
<dbReference type="NCBIfam" id="TIGR00021">
    <property type="entry name" value="rpiA"/>
    <property type="match status" value="1"/>
</dbReference>
<dbReference type="PANTHER" id="PTHR11934">
    <property type="entry name" value="RIBOSE-5-PHOSPHATE ISOMERASE"/>
    <property type="match status" value="1"/>
</dbReference>
<dbReference type="PANTHER" id="PTHR11934:SF0">
    <property type="entry name" value="RIBOSE-5-PHOSPHATE ISOMERASE"/>
    <property type="match status" value="1"/>
</dbReference>
<dbReference type="Pfam" id="PF06026">
    <property type="entry name" value="Rib_5-P_isom_A"/>
    <property type="match status" value="1"/>
</dbReference>
<dbReference type="SUPFAM" id="SSF75445">
    <property type="entry name" value="D-ribose-5-phosphate isomerase (RpiA), lid domain"/>
    <property type="match status" value="1"/>
</dbReference>
<dbReference type="SUPFAM" id="SSF100950">
    <property type="entry name" value="NagB/RpiA/CoA transferase-like"/>
    <property type="match status" value="1"/>
</dbReference>
<sequence length="228" mass="25550">MKDVKALKLMTLNDVLSQINGDMTLGIGTGSTMELLLPQMAQLIKERGYNITGVCTSNKIAFLAKELGIKICEINDVDHIDLAIDGADEVDPSLNIIKGGGGALFREKVIDEMASRFVVVVDETKIVQYLGETFKLPVEVDKFNWYHILRKIESYADIKVERRVNEDVAFITDNGNYILDCKLPKGIDPYKFHEYLIHLTGVFETGYFLDMADQVIVGTQEGVKILEK</sequence>
<proteinExistence type="inferred from homology"/>
<gene>
    <name evidence="1" type="primary">rpiA</name>
    <name type="ordered locus">SAV2336</name>
</gene>
<protein>
    <recommendedName>
        <fullName evidence="1">Ribose-5-phosphate isomerase A</fullName>
        <ecNumber evidence="1">5.3.1.6</ecNumber>
    </recommendedName>
    <alternativeName>
        <fullName evidence="1">Phosphoriboisomerase A</fullName>
        <shortName evidence="1">PRI</shortName>
    </alternativeName>
</protein>
<reference key="1">
    <citation type="journal article" date="2001" name="Lancet">
        <title>Whole genome sequencing of meticillin-resistant Staphylococcus aureus.</title>
        <authorList>
            <person name="Kuroda M."/>
            <person name="Ohta T."/>
            <person name="Uchiyama I."/>
            <person name="Baba T."/>
            <person name="Yuzawa H."/>
            <person name="Kobayashi I."/>
            <person name="Cui L."/>
            <person name="Oguchi A."/>
            <person name="Aoki K."/>
            <person name="Nagai Y."/>
            <person name="Lian J.-Q."/>
            <person name="Ito T."/>
            <person name="Kanamori M."/>
            <person name="Matsumaru H."/>
            <person name="Maruyama A."/>
            <person name="Murakami H."/>
            <person name="Hosoyama A."/>
            <person name="Mizutani-Ui Y."/>
            <person name="Takahashi N.K."/>
            <person name="Sawano T."/>
            <person name="Inoue R."/>
            <person name="Kaito C."/>
            <person name="Sekimizu K."/>
            <person name="Hirakawa H."/>
            <person name="Kuhara S."/>
            <person name="Goto S."/>
            <person name="Yabuzaki J."/>
            <person name="Kanehisa M."/>
            <person name="Yamashita A."/>
            <person name="Oshima K."/>
            <person name="Furuya K."/>
            <person name="Yoshino C."/>
            <person name="Shiba T."/>
            <person name="Hattori M."/>
            <person name="Ogasawara N."/>
            <person name="Hayashi H."/>
            <person name="Hiramatsu K."/>
        </authorList>
    </citation>
    <scope>NUCLEOTIDE SEQUENCE [LARGE SCALE GENOMIC DNA]</scope>
    <source>
        <strain>Mu50 / ATCC 700699</strain>
    </source>
</reference>
<accession>P66694</accession>
<accession>Q99RT7</accession>
<comment type="function">
    <text evidence="1">Catalyzes the reversible conversion of ribose-5-phosphate to ribulose 5-phosphate.</text>
</comment>
<comment type="catalytic activity">
    <reaction evidence="1">
        <text>aldehydo-D-ribose 5-phosphate = D-ribulose 5-phosphate</text>
        <dbReference type="Rhea" id="RHEA:14657"/>
        <dbReference type="ChEBI" id="CHEBI:58121"/>
        <dbReference type="ChEBI" id="CHEBI:58273"/>
        <dbReference type="EC" id="5.3.1.6"/>
    </reaction>
</comment>
<comment type="pathway">
    <text evidence="1">Carbohydrate degradation; pentose phosphate pathway; D-ribose 5-phosphate from D-ribulose 5-phosphate (non-oxidative stage): step 1/1.</text>
</comment>
<comment type="subunit">
    <text evidence="1">Homodimer.</text>
</comment>
<comment type="similarity">
    <text evidence="1">Belongs to the ribose 5-phosphate isomerase family.</text>
</comment>
<organism>
    <name type="scientific">Staphylococcus aureus (strain Mu50 / ATCC 700699)</name>
    <dbReference type="NCBI Taxonomy" id="158878"/>
    <lineage>
        <taxon>Bacteria</taxon>
        <taxon>Bacillati</taxon>
        <taxon>Bacillota</taxon>
        <taxon>Bacilli</taxon>
        <taxon>Bacillales</taxon>
        <taxon>Staphylococcaceae</taxon>
        <taxon>Staphylococcus</taxon>
    </lineage>
</organism>
<evidence type="ECO:0000255" key="1">
    <source>
        <dbReference type="HAMAP-Rule" id="MF_00170"/>
    </source>
</evidence>